<organism>
    <name type="scientific">Neisseria gonorrhoeae (strain NCCP11945)</name>
    <dbReference type="NCBI Taxonomy" id="521006"/>
    <lineage>
        <taxon>Bacteria</taxon>
        <taxon>Pseudomonadati</taxon>
        <taxon>Pseudomonadota</taxon>
        <taxon>Betaproteobacteria</taxon>
        <taxon>Neisseriales</taxon>
        <taxon>Neisseriaceae</taxon>
        <taxon>Neisseria</taxon>
    </lineage>
</organism>
<dbReference type="EC" id="2.7.7.60" evidence="1"/>
<dbReference type="EMBL" id="CP001050">
    <property type="protein sequence ID" value="ACF29505.1"/>
    <property type="molecule type" value="Genomic_DNA"/>
</dbReference>
<dbReference type="RefSeq" id="WP_003691053.1">
    <property type="nucleotide sequence ID" value="NC_011035.1"/>
</dbReference>
<dbReference type="SMR" id="B4RL14"/>
<dbReference type="GeneID" id="66753293"/>
<dbReference type="KEGG" id="ngk:NGK_0824"/>
<dbReference type="HOGENOM" id="CLU_061281_3_0_4"/>
<dbReference type="UniPathway" id="UPA00056">
    <property type="reaction ID" value="UER00093"/>
</dbReference>
<dbReference type="Proteomes" id="UP000002564">
    <property type="component" value="Chromosome"/>
</dbReference>
<dbReference type="GO" id="GO:0050518">
    <property type="term" value="F:2-C-methyl-D-erythritol 4-phosphate cytidylyltransferase activity"/>
    <property type="evidence" value="ECO:0007669"/>
    <property type="project" value="UniProtKB-UniRule"/>
</dbReference>
<dbReference type="GO" id="GO:0019288">
    <property type="term" value="P:isopentenyl diphosphate biosynthetic process, methylerythritol 4-phosphate pathway"/>
    <property type="evidence" value="ECO:0007669"/>
    <property type="project" value="UniProtKB-UniRule"/>
</dbReference>
<dbReference type="CDD" id="cd02516">
    <property type="entry name" value="CDP-ME_synthetase"/>
    <property type="match status" value="1"/>
</dbReference>
<dbReference type="FunFam" id="3.90.550.10:FF:000003">
    <property type="entry name" value="2-C-methyl-D-erythritol 4-phosphate cytidylyltransferase"/>
    <property type="match status" value="1"/>
</dbReference>
<dbReference type="Gene3D" id="3.90.550.10">
    <property type="entry name" value="Spore Coat Polysaccharide Biosynthesis Protein SpsA, Chain A"/>
    <property type="match status" value="1"/>
</dbReference>
<dbReference type="HAMAP" id="MF_00108">
    <property type="entry name" value="IspD"/>
    <property type="match status" value="1"/>
</dbReference>
<dbReference type="InterPro" id="IPR001228">
    <property type="entry name" value="IspD"/>
</dbReference>
<dbReference type="InterPro" id="IPR034683">
    <property type="entry name" value="IspD/TarI"/>
</dbReference>
<dbReference type="InterPro" id="IPR050088">
    <property type="entry name" value="IspD/TarI_cytidylyltransf_bact"/>
</dbReference>
<dbReference type="InterPro" id="IPR018294">
    <property type="entry name" value="ISPD_synthase_CS"/>
</dbReference>
<dbReference type="InterPro" id="IPR029044">
    <property type="entry name" value="Nucleotide-diphossugar_trans"/>
</dbReference>
<dbReference type="NCBIfam" id="TIGR00453">
    <property type="entry name" value="ispD"/>
    <property type="match status" value="1"/>
</dbReference>
<dbReference type="PANTHER" id="PTHR32125">
    <property type="entry name" value="2-C-METHYL-D-ERYTHRITOL 4-PHOSPHATE CYTIDYLYLTRANSFERASE, CHLOROPLASTIC"/>
    <property type="match status" value="1"/>
</dbReference>
<dbReference type="PANTHER" id="PTHR32125:SF4">
    <property type="entry name" value="2-C-METHYL-D-ERYTHRITOL 4-PHOSPHATE CYTIDYLYLTRANSFERASE, CHLOROPLASTIC"/>
    <property type="match status" value="1"/>
</dbReference>
<dbReference type="Pfam" id="PF01128">
    <property type="entry name" value="IspD"/>
    <property type="match status" value="1"/>
</dbReference>
<dbReference type="SUPFAM" id="SSF53448">
    <property type="entry name" value="Nucleotide-diphospho-sugar transferases"/>
    <property type="match status" value="1"/>
</dbReference>
<dbReference type="PROSITE" id="PS01295">
    <property type="entry name" value="ISPD"/>
    <property type="match status" value="1"/>
</dbReference>
<name>ISPD_NEIG2</name>
<sequence length="229" mass="24555">MKRKNIALIPAAGIGVRFGADKPKQYVEIGSKTVLEHVLGIFERHEAVDLTVVVVSPEDTFADKVQTAFPQVRVWKNGGQTRAETVRNGVAKLLETGLAAETDNILVHDAARCCLPSEALTRLIEQAGNAAEGGILAVPVADTLKRAESGQISATVDRSGLWQAQTPQLFQAGLLHRALAAENLDGITDEASAVEKLGVRPLLIQGDARNLKLTQPQDAYIVRLLLNAV</sequence>
<evidence type="ECO:0000255" key="1">
    <source>
        <dbReference type="HAMAP-Rule" id="MF_00108"/>
    </source>
</evidence>
<feature type="chain" id="PRO_1000094334" description="2-C-methyl-D-erythritol 4-phosphate cytidylyltransferase">
    <location>
        <begin position="1"/>
        <end position="229"/>
    </location>
</feature>
<feature type="site" description="Transition state stabilizer" evidence="1">
    <location>
        <position position="17"/>
    </location>
</feature>
<feature type="site" description="Transition state stabilizer" evidence="1">
    <location>
        <position position="24"/>
    </location>
</feature>
<feature type="site" description="Positions MEP for the nucleophilic attack" evidence="1">
    <location>
        <position position="158"/>
    </location>
</feature>
<feature type="site" description="Positions MEP for the nucleophilic attack" evidence="1">
    <location>
        <position position="212"/>
    </location>
</feature>
<proteinExistence type="inferred from homology"/>
<comment type="function">
    <text evidence="1">Catalyzes the formation of 4-diphosphocytidyl-2-C-methyl-D-erythritol from CTP and 2-C-methyl-D-erythritol 4-phosphate (MEP).</text>
</comment>
<comment type="catalytic activity">
    <reaction evidence="1">
        <text>2-C-methyl-D-erythritol 4-phosphate + CTP + H(+) = 4-CDP-2-C-methyl-D-erythritol + diphosphate</text>
        <dbReference type="Rhea" id="RHEA:13429"/>
        <dbReference type="ChEBI" id="CHEBI:15378"/>
        <dbReference type="ChEBI" id="CHEBI:33019"/>
        <dbReference type="ChEBI" id="CHEBI:37563"/>
        <dbReference type="ChEBI" id="CHEBI:57823"/>
        <dbReference type="ChEBI" id="CHEBI:58262"/>
        <dbReference type="EC" id="2.7.7.60"/>
    </reaction>
</comment>
<comment type="pathway">
    <text evidence="1">Isoprenoid biosynthesis; isopentenyl diphosphate biosynthesis via DXP pathway; isopentenyl diphosphate from 1-deoxy-D-xylulose 5-phosphate: step 2/6.</text>
</comment>
<comment type="similarity">
    <text evidence="1">Belongs to the IspD/TarI cytidylyltransferase family. IspD subfamily.</text>
</comment>
<reference key="1">
    <citation type="journal article" date="2008" name="J. Bacteriol.">
        <title>Complete genome sequence of Neisseria gonorrhoeae NCCP11945.</title>
        <authorList>
            <person name="Chung G.T."/>
            <person name="Yoo J.S."/>
            <person name="Oh H.B."/>
            <person name="Lee Y.S."/>
            <person name="Cha S.H."/>
            <person name="Kim S.J."/>
            <person name="Yoo C.K."/>
        </authorList>
    </citation>
    <scope>NUCLEOTIDE SEQUENCE [LARGE SCALE GENOMIC DNA]</scope>
    <source>
        <strain>NCCP11945</strain>
    </source>
</reference>
<protein>
    <recommendedName>
        <fullName evidence="1">2-C-methyl-D-erythritol 4-phosphate cytidylyltransferase</fullName>
        <ecNumber evidence="1">2.7.7.60</ecNumber>
    </recommendedName>
    <alternativeName>
        <fullName evidence="1">4-diphosphocytidyl-2C-methyl-D-erythritol synthase</fullName>
    </alternativeName>
    <alternativeName>
        <fullName evidence="1">MEP cytidylyltransferase</fullName>
        <shortName evidence="1">MCT</shortName>
    </alternativeName>
</protein>
<gene>
    <name evidence="1" type="primary">ispD</name>
    <name type="ordered locus">NGK_0824</name>
</gene>
<keyword id="KW-0414">Isoprene biosynthesis</keyword>
<keyword id="KW-0548">Nucleotidyltransferase</keyword>
<keyword id="KW-0808">Transferase</keyword>
<accession>B4RL14</accession>